<dbReference type="EMBL" id="X51662">
    <property type="protein sequence ID" value="CAA35973.1"/>
    <property type="status" value="ALT_INIT"/>
    <property type="molecule type" value="Genomic_DNA"/>
</dbReference>
<dbReference type="EMBL" id="U82598">
    <property type="protein sequence ID" value="AAB40733.1"/>
    <property type="status" value="ALT_INIT"/>
    <property type="molecule type" value="Genomic_DNA"/>
</dbReference>
<dbReference type="EMBL" id="U00096">
    <property type="protein sequence ID" value="AAC73637.1"/>
    <property type="molecule type" value="Genomic_DNA"/>
</dbReference>
<dbReference type="EMBL" id="AP009048">
    <property type="protein sequence ID" value="BAE76312.1"/>
    <property type="molecule type" value="Genomic_DNA"/>
</dbReference>
<dbReference type="PIR" id="F64785">
    <property type="entry name" value="QQECY5"/>
</dbReference>
<dbReference type="RefSeq" id="NP_415068.1">
    <property type="nucleotide sequence ID" value="NC_000913.3"/>
</dbReference>
<dbReference type="RefSeq" id="WP_000805428.1">
    <property type="nucleotide sequence ID" value="NZ_SSZK01000024.1"/>
</dbReference>
<dbReference type="SMR" id="P0AEL8"/>
<dbReference type="BioGRID" id="4260751">
    <property type="interactions" value="122"/>
</dbReference>
<dbReference type="BioGRID" id="851416">
    <property type="interactions" value="3"/>
</dbReference>
<dbReference type="DIP" id="DIP-48119N"/>
<dbReference type="FunCoup" id="P0AEL8">
    <property type="interactions" value="188"/>
</dbReference>
<dbReference type="IntAct" id="P0AEL8">
    <property type="interactions" value="4"/>
</dbReference>
<dbReference type="STRING" id="511145.b0535"/>
<dbReference type="PaxDb" id="511145-b0535"/>
<dbReference type="EnsemblBacteria" id="AAC73637">
    <property type="protein sequence ID" value="AAC73637"/>
    <property type="gene ID" value="b0535"/>
</dbReference>
<dbReference type="GeneID" id="947079"/>
<dbReference type="KEGG" id="ecj:JW5073"/>
<dbReference type="KEGG" id="eco:b0535"/>
<dbReference type="KEGG" id="ecoc:C3026_02625"/>
<dbReference type="PATRIC" id="fig|511145.12.peg.556"/>
<dbReference type="EchoBASE" id="EB1095"/>
<dbReference type="eggNOG" id="COG2197">
    <property type="taxonomic scope" value="Bacteria"/>
</dbReference>
<dbReference type="HOGENOM" id="CLU_000445_90_1_6"/>
<dbReference type="InParanoid" id="P0AEL8"/>
<dbReference type="OMA" id="IRQWDGA"/>
<dbReference type="OrthoDB" id="9796655at2"/>
<dbReference type="PhylomeDB" id="P0AEL8"/>
<dbReference type="BioCyc" id="EcoCyc:EG11103-MONOMER"/>
<dbReference type="PRO" id="PR:P0AEL8"/>
<dbReference type="Proteomes" id="UP000000625">
    <property type="component" value="Chromosome"/>
</dbReference>
<dbReference type="GO" id="GO:0005737">
    <property type="term" value="C:cytoplasm"/>
    <property type="evidence" value="ECO:0007669"/>
    <property type="project" value="UniProtKB-SubCell"/>
</dbReference>
<dbReference type="GO" id="GO:0003677">
    <property type="term" value="F:DNA binding"/>
    <property type="evidence" value="ECO:0007669"/>
    <property type="project" value="UniProtKB-KW"/>
</dbReference>
<dbReference type="GO" id="GO:0000160">
    <property type="term" value="P:phosphorelay signal transduction system"/>
    <property type="evidence" value="ECO:0007669"/>
    <property type="project" value="UniProtKB-KW"/>
</dbReference>
<dbReference type="GO" id="GO:0006355">
    <property type="term" value="P:regulation of DNA-templated transcription"/>
    <property type="evidence" value="ECO:0007669"/>
    <property type="project" value="InterPro"/>
</dbReference>
<dbReference type="CDD" id="cd06170">
    <property type="entry name" value="LuxR_C_like"/>
    <property type="match status" value="1"/>
</dbReference>
<dbReference type="CDD" id="cd17535">
    <property type="entry name" value="REC_NarL-like"/>
    <property type="match status" value="1"/>
</dbReference>
<dbReference type="Gene3D" id="3.40.50.2300">
    <property type="match status" value="1"/>
</dbReference>
<dbReference type="InterPro" id="IPR011006">
    <property type="entry name" value="CheY-like_superfamily"/>
</dbReference>
<dbReference type="InterPro" id="IPR016032">
    <property type="entry name" value="Sig_transdc_resp-reg_C-effctor"/>
</dbReference>
<dbReference type="InterPro" id="IPR001789">
    <property type="entry name" value="Sig_transdc_resp-reg_receiver"/>
</dbReference>
<dbReference type="InterPro" id="IPR000792">
    <property type="entry name" value="Tscrpt_reg_LuxR_C"/>
</dbReference>
<dbReference type="InterPro" id="IPR039420">
    <property type="entry name" value="WalR-like"/>
</dbReference>
<dbReference type="NCBIfam" id="NF007403">
    <property type="entry name" value="PRK09935.1"/>
    <property type="match status" value="1"/>
</dbReference>
<dbReference type="PANTHER" id="PTHR43214:SF41">
    <property type="entry name" value="NITRATE_NITRITE RESPONSE REGULATOR PROTEIN NARP"/>
    <property type="match status" value="1"/>
</dbReference>
<dbReference type="PANTHER" id="PTHR43214">
    <property type="entry name" value="TWO-COMPONENT RESPONSE REGULATOR"/>
    <property type="match status" value="1"/>
</dbReference>
<dbReference type="Pfam" id="PF00196">
    <property type="entry name" value="GerE"/>
    <property type="match status" value="1"/>
</dbReference>
<dbReference type="Pfam" id="PF00072">
    <property type="entry name" value="Response_reg"/>
    <property type="match status" value="1"/>
</dbReference>
<dbReference type="PRINTS" id="PR00038">
    <property type="entry name" value="HTHLUXR"/>
</dbReference>
<dbReference type="SMART" id="SM00421">
    <property type="entry name" value="HTH_LUXR"/>
    <property type="match status" value="1"/>
</dbReference>
<dbReference type="SMART" id="SM00448">
    <property type="entry name" value="REC"/>
    <property type="match status" value="1"/>
</dbReference>
<dbReference type="SUPFAM" id="SSF46894">
    <property type="entry name" value="C-terminal effector domain of the bipartite response regulators"/>
    <property type="match status" value="1"/>
</dbReference>
<dbReference type="SUPFAM" id="SSF52172">
    <property type="entry name" value="CheY-like"/>
    <property type="match status" value="1"/>
</dbReference>
<dbReference type="PROSITE" id="PS00622">
    <property type="entry name" value="HTH_LUXR_1"/>
    <property type="match status" value="1"/>
</dbReference>
<dbReference type="PROSITE" id="PS50043">
    <property type="entry name" value="HTH_LUXR_2"/>
    <property type="match status" value="1"/>
</dbReference>
<dbReference type="PROSITE" id="PS50110">
    <property type="entry name" value="RESPONSE_REGULATORY"/>
    <property type="match status" value="1"/>
</dbReference>
<gene>
    <name type="primary">fimZ</name>
    <name type="synonym">ybcA</name>
    <name type="ordered locus">b0535</name>
    <name type="ordered locus">JW5073</name>
</gene>
<name>FIMZ_ECOLI</name>
<feature type="chain" id="PRO_0000081284" description="Fimbriae Z protein">
    <location>
        <begin position="1"/>
        <end position="210"/>
    </location>
</feature>
<feature type="domain" description="Response regulatory" evidence="1">
    <location>
        <begin position="5"/>
        <end position="121"/>
    </location>
</feature>
<feature type="domain" description="HTH luxR-type" evidence="2">
    <location>
        <begin position="143"/>
        <end position="208"/>
    </location>
</feature>
<feature type="DNA-binding region" description="H-T-H motif" evidence="2">
    <location>
        <begin position="167"/>
        <end position="186"/>
    </location>
</feature>
<feature type="modified residue" description="4-aspartylphosphate" evidence="1">
    <location>
        <position position="56"/>
    </location>
</feature>
<protein>
    <recommendedName>
        <fullName>Fimbriae Z protein</fullName>
    </recommendedName>
</protein>
<sequence length="210" mass="23664">MKPTSVIIMDTHPIIRMSIEVLLQKNSELQIVLKTDDYRITIDYLRTRPVDLIIMDIDLPGTDGFTFLKRIKQIQSTVKVLFLSSKSECFYAGRAIQAGANGFVSKCNDQNDIFHAVQMILSGYTFFPSETLNYIKSNKCSTNSSTVTVLSNREVTILRYLVSGLSNKEIADKLLLSNKTVSAHKSNIYGKLGLHSIVELIDYAKLYELI</sequence>
<proteinExistence type="inferred from homology"/>
<organism>
    <name type="scientific">Escherichia coli (strain K12)</name>
    <dbReference type="NCBI Taxonomy" id="83333"/>
    <lineage>
        <taxon>Bacteria</taxon>
        <taxon>Pseudomonadati</taxon>
        <taxon>Pseudomonadota</taxon>
        <taxon>Gammaproteobacteria</taxon>
        <taxon>Enterobacterales</taxon>
        <taxon>Enterobacteriaceae</taxon>
        <taxon>Escherichia</taxon>
    </lineage>
</organism>
<reference key="1">
    <citation type="journal article" date="1990" name="Mol. Gen. Genet.">
        <title>Nucleotide sequence of the region encompassing the int gene of a cryptic prophage and the DNA Y gene flanked by a curved DNA sequence of Escherichia coli K12.</title>
        <authorList>
            <person name="Muramatsu S."/>
            <person name="Mizuno T."/>
        </authorList>
    </citation>
    <scope>NUCLEOTIDE SEQUENCE [GENOMIC DNA]</scope>
    <source>
        <strain>K12</strain>
    </source>
</reference>
<reference key="2">
    <citation type="submission" date="1997-01" db="EMBL/GenBank/DDBJ databases">
        <title>Sequence of minutes 4-25 of Escherichia coli.</title>
        <authorList>
            <person name="Chung E."/>
            <person name="Allen E."/>
            <person name="Araujo R."/>
            <person name="Aparicio A.M."/>
            <person name="Davis K."/>
            <person name="Duncan M."/>
            <person name="Federspiel N."/>
            <person name="Hyman R."/>
            <person name="Kalman S."/>
            <person name="Komp C."/>
            <person name="Kurdi O."/>
            <person name="Lew H."/>
            <person name="Lin D."/>
            <person name="Namath A."/>
            <person name="Oefner P."/>
            <person name="Roberts D."/>
            <person name="Schramm S."/>
            <person name="Davis R.W."/>
        </authorList>
    </citation>
    <scope>NUCLEOTIDE SEQUENCE [LARGE SCALE GENOMIC DNA]</scope>
    <source>
        <strain>K12 / MG1655 / ATCC 47076</strain>
    </source>
</reference>
<reference key="3">
    <citation type="journal article" date="1997" name="Science">
        <title>The complete genome sequence of Escherichia coli K-12.</title>
        <authorList>
            <person name="Blattner F.R."/>
            <person name="Plunkett G. III"/>
            <person name="Bloch C.A."/>
            <person name="Perna N.T."/>
            <person name="Burland V."/>
            <person name="Riley M."/>
            <person name="Collado-Vides J."/>
            <person name="Glasner J.D."/>
            <person name="Rode C.K."/>
            <person name="Mayhew G.F."/>
            <person name="Gregor J."/>
            <person name="Davis N.W."/>
            <person name="Kirkpatrick H.A."/>
            <person name="Goeden M.A."/>
            <person name="Rose D.J."/>
            <person name="Mau B."/>
            <person name="Shao Y."/>
        </authorList>
    </citation>
    <scope>NUCLEOTIDE SEQUENCE [LARGE SCALE GENOMIC DNA]</scope>
    <source>
        <strain>K12 / MG1655 / ATCC 47076</strain>
    </source>
</reference>
<reference key="4">
    <citation type="journal article" date="2006" name="Mol. Syst. Biol.">
        <title>Highly accurate genome sequences of Escherichia coli K-12 strains MG1655 and W3110.</title>
        <authorList>
            <person name="Hayashi K."/>
            <person name="Morooka N."/>
            <person name="Yamamoto Y."/>
            <person name="Fujita K."/>
            <person name="Isono K."/>
            <person name="Choi S."/>
            <person name="Ohtsubo E."/>
            <person name="Baba T."/>
            <person name="Wanner B.L."/>
            <person name="Mori H."/>
            <person name="Horiuchi T."/>
        </authorList>
    </citation>
    <scope>NUCLEOTIDE SEQUENCE [LARGE SCALE GENOMIC DNA]</scope>
    <source>
        <strain>K12 / W3110 / ATCC 27325 / DSM 5911</strain>
    </source>
</reference>
<accession>P0AEL8</accession>
<accession>P21502</accession>
<accession>P77080</accession>
<accession>Q2MBP4</accession>
<evidence type="ECO:0000255" key="1">
    <source>
        <dbReference type="PROSITE-ProRule" id="PRU00169"/>
    </source>
</evidence>
<evidence type="ECO:0000255" key="2">
    <source>
        <dbReference type="PROSITE-ProRule" id="PRU00411"/>
    </source>
</evidence>
<evidence type="ECO:0000305" key="3"/>
<comment type="subcellular location">
    <subcellularLocation>
        <location evidence="3">Cytoplasm</location>
    </subcellularLocation>
</comment>
<comment type="sequence caution" evidence="3">
    <conflict type="erroneous initiation">
        <sequence resource="EMBL-CDS" id="AAB40733"/>
    </conflict>
</comment>
<comment type="sequence caution" evidence="3">
    <conflict type="erroneous initiation">
        <sequence resource="EMBL-CDS" id="CAA35973"/>
    </conflict>
</comment>
<keyword id="KW-0963">Cytoplasm</keyword>
<keyword id="KW-0238">DNA-binding</keyword>
<keyword id="KW-0597">Phosphoprotein</keyword>
<keyword id="KW-1185">Reference proteome</keyword>
<keyword id="KW-0804">Transcription</keyword>
<keyword id="KW-0805">Transcription regulation</keyword>
<keyword id="KW-0902">Two-component regulatory system</keyword>